<reference key="1">
    <citation type="journal article" date="2007" name="PLoS Genet.">
        <title>Patterns and implications of gene gain and loss in the evolution of Prochlorococcus.</title>
        <authorList>
            <person name="Kettler G.C."/>
            <person name="Martiny A.C."/>
            <person name="Huang K."/>
            <person name="Zucker J."/>
            <person name="Coleman M.L."/>
            <person name="Rodrigue S."/>
            <person name="Chen F."/>
            <person name="Lapidus A."/>
            <person name="Ferriera S."/>
            <person name="Johnson J."/>
            <person name="Steglich C."/>
            <person name="Church G.M."/>
            <person name="Richardson P."/>
            <person name="Chisholm S.W."/>
        </authorList>
    </citation>
    <scope>NUCLEOTIDE SEQUENCE [LARGE SCALE GENOMIC DNA]</scope>
    <source>
        <strain>MIT 9515</strain>
    </source>
</reference>
<name>THIC_PROM5</name>
<organism>
    <name type="scientific">Prochlorococcus marinus (strain MIT 9515)</name>
    <dbReference type="NCBI Taxonomy" id="167542"/>
    <lineage>
        <taxon>Bacteria</taxon>
        <taxon>Bacillati</taxon>
        <taxon>Cyanobacteriota</taxon>
        <taxon>Cyanophyceae</taxon>
        <taxon>Synechococcales</taxon>
        <taxon>Prochlorococcaceae</taxon>
        <taxon>Prochlorococcus</taxon>
    </lineage>
</organism>
<feature type="chain" id="PRO_1000004789" description="Phosphomethylpyrimidine synthase">
    <location>
        <begin position="1"/>
        <end position="456"/>
    </location>
</feature>
<feature type="binding site" evidence="1">
    <location>
        <position position="80"/>
    </location>
    <ligand>
        <name>substrate</name>
    </ligand>
</feature>
<feature type="binding site" evidence="1">
    <location>
        <position position="109"/>
    </location>
    <ligand>
        <name>substrate</name>
    </ligand>
</feature>
<feature type="binding site" evidence="1">
    <location>
        <position position="139"/>
    </location>
    <ligand>
        <name>substrate</name>
    </ligand>
</feature>
<feature type="binding site" evidence="1">
    <location>
        <position position="175"/>
    </location>
    <ligand>
        <name>substrate</name>
    </ligand>
</feature>
<feature type="binding site" evidence="1">
    <location>
        <begin position="195"/>
        <end position="197"/>
    </location>
    <ligand>
        <name>substrate</name>
    </ligand>
</feature>
<feature type="binding site" evidence="1">
    <location>
        <begin position="236"/>
        <end position="239"/>
    </location>
    <ligand>
        <name>substrate</name>
    </ligand>
</feature>
<feature type="binding site" evidence="1">
    <location>
        <position position="275"/>
    </location>
    <ligand>
        <name>substrate</name>
    </ligand>
</feature>
<feature type="binding site" evidence="1">
    <location>
        <position position="279"/>
    </location>
    <ligand>
        <name>Zn(2+)</name>
        <dbReference type="ChEBI" id="CHEBI:29105"/>
    </ligand>
</feature>
<feature type="binding site" evidence="1">
    <location>
        <position position="302"/>
    </location>
    <ligand>
        <name>substrate</name>
    </ligand>
</feature>
<feature type="binding site" evidence="1">
    <location>
        <position position="343"/>
    </location>
    <ligand>
        <name>Zn(2+)</name>
        <dbReference type="ChEBI" id="CHEBI:29105"/>
    </ligand>
</feature>
<feature type="binding site" evidence="1">
    <location>
        <position position="423"/>
    </location>
    <ligand>
        <name>[4Fe-4S] cluster</name>
        <dbReference type="ChEBI" id="CHEBI:49883"/>
        <note>4Fe-4S-S-AdoMet</note>
    </ligand>
</feature>
<feature type="binding site" evidence="1">
    <location>
        <position position="426"/>
    </location>
    <ligand>
        <name>[4Fe-4S] cluster</name>
        <dbReference type="ChEBI" id="CHEBI:49883"/>
        <note>4Fe-4S-S-AdoMet</note>
    </ligand>
</feature>
<feature type="binding site" evidence="1">
    <location>
        <position position="431"/>
    </location>
    <ligand>
        <name>[4Fe-4S] cluster</name>
        <dbReference type="ChEBI" id="CHEBI:49883"/>
        <note>4Fe-4S-S-AdoMet</note>
    </ligand>
</feature>
<evidence type="ECO:0000255" key="1">
    <source>
        <dbReference type="HAMAP-Rule" id="MF_00089"/>
    </source>
</evidence>
<dbReference type="EC" id="4.1.99.17" evidence="1"/>
<dbReference type="EMBL" id="CP000552">
    <property type="protein sequence ID" value="ABM73006.1"/>
    <property type="molecule type" value="Genomic_DNA"/>
</dbReference>
<dbReference type="RefSeq" id="WP_011821091.1">
    <property type="nucleotide sequence ID" value="NC_008817.1"/>
</dbReference>
<dbReference type="SMR" id="A2BYZ5"/>
<dbReference type="STRING" id="167542.P9515_17991"/>
<dbReference type="GeneID" id="60200307"/>
<dbReference type="KEGG" id="pmc:P9515_17991"/>
<dbReference type="eggNOG" id="COG0422">
    <property type="taxonomic scope" value="Bacteria"/>
</dbReference>
<dbReference type="HOGENOM" id="CLU_013181_2_1_3"/>
<dbReference type="OrthoDB" id="9805897at2"/>
<dbReference type="UniPathway" id="UPA00060"/>
<dbReference type="Proteomes" id="UP000001589">
    <property type="component" value="Chromosome"/>
</dbReference>
<dbReference type="GO" id="GO:0005829">
    <property type="term" value="C:cytosol"/>
    <property type="evidence" value="ECO:0007669"/>
    <property type="project" value="TreeGrafter"/>
</dbReference>
<dbReference type="GO" id="GO:0051539">
    <property type="term" value="F:4 iron, 4 sulfur cluster binding"/>
    <property type="evidence" value="ECO:0007669"/>
    <property type="project" value="UniProtKB-KW"/>
</dbReference>
<dbReference type="GO" id="GO:0016830">
    <property type="term" value="F:carbon-carbon lyase activity"/>
    <property type="evidence" value="ECO:0007669"/>
    <property type="project" value="InterPro"/>
</dbReference>
<dbReference type="GO" id="GO:0008270">
    <property type="term" value="F:zinc ion binding"/>
    <property type="evidence" value="ECO:0007669"/>
    <property type="project" value="UniProtKB-UniRule"/>
</dbReference>
<dbReference type="GO" id="GO:0009228">
    <property type="term" value="P:thiamine biosynthetic process"/>
    <property type="evidence" value="ECO:0007669"/>
    <property type="project" value="UniProtKB-KW"/>
</dbReference>
<dbReference type="GO" id="GO:0009229">
    <property type="term" value="P:thiamine diphosphate biosynthetic process"/>
    <property type="evidence" value="ECO:0007669"/>
    <property type="project" value="UniProtKB-UniRule"/>
</dbReference>
<dbReference type="FunFam" id="3.20.20.540:FF:000001">
    <property type="entry name" value="Phosphomethylpyrimidine synthase"/>
    <property type="match status" value="1"/>
</dbReference>
<dbReference type="Gene3D" id="6.10.250.620">
    <property type="match status" value="1"/>
</dbReference>
<dbReference type="Gene3D" id="3.20.20.540">
    <property type="entry name" value="Radical SAM ThiC family, central domain"/>
    <property type="match status" value="1"/>
</dbReference>
<dbReference type="HAMAP" id="MF_00089">
    <property type="entry name" value="ThiC"/>
    <property type="match status" value="1"/>
</dbReference>
<dbReference type="InterPro" id="IPR037509">
    <property type="entry name" value="ThiC"/>
</dbReference>
<dbReference type="InterPro" id="IPR038521">
    <property type="entry name" value="ThiC/Bza_core_dom"/>
</dbReference>
<dbReference type="InterPro" id="IPR002817">
    <property type="entry name" value="ThiC/BzaA/B"/>
</dbReference>
<dbReference type="NCBIfam" id="NF006763">
    <property type="entry name" value="PRK09284.1"/>
    <property type="match status" value="1"/>
</dbReference>
<dbReference type="NCBIfam" id="NF009895">
    <property type="entry name" value="PRK13352.1"/>
    <property type="match status" value="1"/>
</dbReference>
<dbReference type="NCBIfam" id="TIGR00190">
    <property type="entry name" value="thiC"/>
    <property type="match status" value="1"/>
</dbReference>
<dbReference type="PANTHER" id="PTHR30557:SF1">
    <property type="entry name" value="PHOSPHOMETHYLPYRIMIDINE SYNTHASE, CHLOROPLASTIC"/>
    <property type="match status" value="1"/>
</dbReference>
<dbReference type="PANTHER" id="PTHR30557">
    <property type="entry name" value="THIAMINE BIOSYNTHESIS PROTEIN THIC"/>
    <property type="match status" value="1"/>
</dbReference>
<dbReference type="Pfam" id="PF01964">
    <property type="entry name" value="ThiC_Rad_SAM"/>
    <property type="match status" value="1"/>
</dbReference>
<dbReference type="SFLD" id="SFLDF00407">
    <property type="entry name" value="phosphomethylpyrimidine_syntha"/>
    <property type="match status" value="1"/>
</dbReference>
<dbReference type="SFLD" id="SFLDG01114">
    <property type="entry name" value="phosphomethylpyrimidine_syntha"/>
    <property type="match status" value="1"/>
</dbReference>
<dbReference type="SFLD" id="SFLDS00113">
    <property type="entry name" value="Radical_SAM_Phosphomethylpyrim"/>
    <property type="match status" value="1"/>
</dbReference>
<protein>
    <recommendedName>
        <fullName evidence="1">Phosphomethylpyrimidine synthase</fullName>
        <ecNumber evidence="1">4.1.99.17</ecNumber>
    </recommendedName>
    <alternativeName>
        <fullName evidence="1">Hydroxymethylpyrimidine phosphate synthase</fullName>
        <shortName evidence="1">HMP-P synthase</shortName>
        <shortName evidence="1">HMP-phosphate synthase</shortName>
        <shortName evidence="1">HMPP synthase</shortName>
    </alternativeName>
    <alternativeName>
        <fullName evidence="1">Thiamine biosynthesis protein ThiC</fullName>
    </alternativeName>
</protein>
<accession>A2BYZ5</accession>
<comment type="function">
    <text evidence="1">Catalyzes the synthesis of the hydroxymethylpyrimidine phosphate (HMP-P) moiety of thiamine from aminoimidazole ribotide (AIR) in a radical S-adenosyl-L-methionine (SAM)-dependent reaction.</text>
</comment>
<comment type="catalytic activity">
    <reaction evidence="1">
        <text>5-amino-1-(5-phospho-beta-D-ribosyl)imidazole + S-adenosyl-L-methionine = 4-amino-2-methyl-5-(phosphooxymethyl)pyrimidine + CO + 5'-deoxyadenosine + formate + L-methionine + 3 H(+)</text>
        <dbReference type="Rhea" id="RHEA:24840"/>
        <dbReference type="ChEBI" id="CHEBI:15378"/>
        <dbReference type="ChEBI" id="CHEBI:15740"/>
        <dbReference type="ChEBI" id="CHEBI:17245"/>
        <dbReference type="ChEBI" id="CHEBI:17319"/>
        <dbReference type="ChEBI" id="CHEBI:57844"/>
        <dbReference type="ChEBI" id="CHEBI:58354"/>
        <dbReference type="ChEBI" id="CHEBI:59789"/>
        <dbReference type="ChEBI" id="CHEBI:137981"/>
        <dbReference type="EC" id="4.1.99.17"/>
    </reaction>
</comment>
<comment type="cofactor">
    <cofactor evidence="1">
        <name>[4Fe-4S] cluster</name>
        <dbReference type="ChEBI" id="CHEBI:49883"/>
    </cofactor>
    <text evidence="1">Binds 1 [4Fe-4S] cluster per subunit. The cluster is coordinated with 3 cysteines and an exchangeable S-adenosyl-L-methionine.</text>
</comment>
<comment type="pathway">
    <text evidence="1">Cofactor biosynthesis; thiamine diphosphate biosynthesis.</text>
</comment>
<comment type="similarity">
    <text evidence="1">Belongs to the ThiC family.</text>
</comment>
<gene>
    <name evidence="1" type="primary">thiC</name>
    <name type="ordered locus">P9515_17991</name>
</gene>
<proteinExistence type="inferred from homology"/>
<keyword id="KW-0004">4Fe-4S</keyword>
<keyword id="KW-0408">Iron</keyword>
<keyword id="KW-0411">Iron-sulfur</keyword>
<keyword id="KW-0456">Lyase</keyword>
<keyword id="KW-0479">Metal-binding</keyword>
<keyword id="KW-0949">S-adenosyl-L-methionine</keyword>
<keyword id="KW-0784">Thiamine biosynthesis</keyword>
<keyword id="KW-0862">Zinc</keyword>
<sequence length="456" mass="50889">MRNSWIKPRLGQKNITQMNFAKNGIITEEMNYVAQKENLPSSLIMEEVARGRLIIPANINHVNLEPMAIGIASKCKVNANIGASPNASDINEEVEKLRLAVKYGADTVMDLSTGGVNLDEVRQAIIKESSVPIGTVPVYQALESVHGSIDRLTEDDFLHIIEKHCQQGVDYQTIHAGLLIEHLPKVKGRITGIVSRGGGILAQWMLHHFKQNPLYTRFDDICEIFKKYDCTFSLGDSLRPGCLHDASDDAQLAELKTLGELTRRAWAHNVQVMVEGPGHVPMDQIEFNVRKQMEECSEAPFYVLGPLVTDISPGYDHISSAIGAAMAGWYGTAMLCYVTPKEHLGLPNAEDVREGLIAYKIAAHAADIARHRAGARDRDDELSHARYTFDWNKQFELSLDPERAKQYHDETLPEEIFKKAEFCSMCGPKHCPMNSKISDETLDQLNNKLAKCDIKV</sequence>